<evidence type="ECO:0000255" key="1">
    <source>
        <dbReference type="HAMAP-Rule" id="MF_04007"/>
    </source>
</evidence>
<keyword id="KW-0235">DNA replication</keyword>
<keyword id="KW-0238">DNA-binding</keyword>
<keyword id="KW-1048">Host nucleus</keyword>
<keyword id="KW-1185">Reference proteome</keyword>
<accession>P52338</accession>
<organism>
    <name type="scientific">Human herpesvirus 6A (strain Uganda-1102)</name>
    <name type="common">HHV-6 variant A</name>
    <name type="synonym">Human B lymphotropic virus</name>
    <dbReference type="NCBI Taxonomy" id="10370"/>
    <lineage>
        <taxon>Viruses</taxon>
        <taxon>Duplodnaviria</taxon>
        <taxon>Heunggongvirae</taxon>
        <taxon>Peploviricota</taxon>
        <taxon>Herviviricetes</taxon>
        <taxon>Herpesvirales</taxon>
        <taxon>Orthoherpesviridae</taxon>
        <taxon>Betaherpesvirinae</taxon>
        <taxon>Roseolovirus</taxon>
        <taxon>Roseolovirus humanbeta6a</taxon>
        <taxon>Human betaherpesvirus 6A</taxon>
    </lineage>
</organism>
<name>DNBI_HHV6U</name>
<sequence length="1132" mass="127763">MADENETVVSAPVSTAAWIYVFPKDKELLDVLSVLSLMERNSPIVISPLLMNLTVENDFSTTVKTPITNFGGTILTKITSFMPVCFFFHGTEQLVGMAEDHGDLIRLCEQTRQKFHLQSFEVPTARKVIDIKALCSAVGKDADSVICHVACGNGFKELLFAGLLIPCVEEQIQVQVGEYSCVKIPLYSATLFETEETISLSSCTEFIQERGFFLPALSETLFYYVFTSWGTTLRFSNTKELIDAGLKQFTQDGEQTVKLAPHKTYLGISGQKISAVEKDFLMLVDSVVTELSFSHVAEYLDSVYDPSQIMNFNDWPIIRNSETHAERMAQLTNLKLHLSSHLAVLIFAPNSILYCSKLAFIPNVKQAFNSVMTQELLLRSLSFCNALSSLSDDVYNDNRKIIKCDSTSGKDDKFSANHLAYACATSPQLLSFVVWNLNRMSVYNAGNAHTEIYNHLVNCSANLCEFCDGKCCQSCIGTAMVRVGTRLPAIPKNVKKEPLVMSMFSRYYAEVDILGSFGRKPVSELKEIGKDQQNTLSLDRGKFVSQIFDYCKKNSLIDPVTGEDTFNVRSKKDFVSIIHGLTQCIEECVSRCIVEMRRTQTPREQIENCLQSFNVDTTPYATAFSPFLTFSYYKVILTVLQNLALIVASGHVVDRPCTGNSISKWLVQQYQSLYGTFHSSYLKKGFLNTRTVKVASNVDMEQILDCDLYKSGKYVKTTIQAKLCRLSMQCLRDFRIKNRPFNKSSKTAHNNPYFKKNVKHKKNPLSGCISFLLFKYHDKLFPNVKISCLELWQRFLLNNVPKTLDIGNPEEVKTFIKFAFSITNTYDEIDIIDIQPECLSTFIDCYFHNKFLSALGFHDYLTSLHGLTSKLVTQNPVLFPVVLDKQPKFSSIQEYLVYVKKLVLDGVPNPVIASLSKEPNFGTIFTSRSLVTFGLTLEKFVSLANREYFQFGQLGWIGGSGVDRNLNPTSSALQDFRFMRQKTIIATKFSEVIVKKVRREAIMFDTEVVKGKVLSIVENLTNDIDPELLIIAEVMRDREDKPTMDDMLFFVDGREALAASIMLKLNHLVDMNVKDFSITNLQSVFETVSSNDAPVYDFSEILAEEDDQGNGVLKCDETETETDEPMTKKNRL</sequence>
<feature type="chain" id="PRO_0000115752" description="Major DNA-binding protein">
    <location>
        <begin position="1"/>
        <end position="1132"/>
    </location>
</feature>
<feature type="region of interest" description="Required for nuclear localization" evidence="1">
    <location>
        <begin position="1112"/>
        <end position="1132"/>
    </location>
</feature>
<protein>
    <recommendedName>
        <fullName evidence="1">Major DNA-binding protein</fullName>
    </recommendedName>
</protein>
<proteinExistence type="inferred from homology"/>
<gene>
    <name evidence="1" type="primary">DBP</name>
    <name type="synonym">U41</name>
</gene>
<reference key="1">
    <citation type="journal article" date="1995" name="Virology">
        <title>The DNA sequence of human herpesvirus-6: structure, coding content, and genome evolution.</title>
        <authorList>
            <person name="Gompels U.A."/>
            <person name="Nicholas J."/>
            <person name="Lawrence G.L."/>
            <person name="Jones M."/>
            <person name="Thomson B.J."/>
            <person name="Martin M.E.D."/>
            <person name="Efstathiou S."/>
            <person name="Craxton M.A."/>
            <person name="Macaulay H.A."/>
        </authorList>
    </citation>
    <scope>NUCLEOTIDE SEQUENCE [LARGE SCALE GENOMIC DNA]</scope>
</reference>
<comment type="function">
    <text>Single-stranded DNA-binding protein required for DNA replication.</text>
</comment>
<comment type="function">
    <text evidence="1">Plays several crucial roles in viral infection. Participates in the opening of the viral DNA origin to initiate replication by interacting with the origin-binding protein. May disrupt loops, hairpins and other secondary structures present on ssDNA to reduce and eliminate pausing of viral DNA polymerase at specific sites during elongation. Promotes viral DNA recombination by performing strand-transfer, characterized by the ability to transfer a DNA strand from a linear duplex to a complementary single-stranded DNA circle. Can also catalyze the renaturation of complementary single strands. Additionally, reorganizes the host cell nucleus, leading to the formation of prereplicative sites and replication compartments. This process is driven by the protein which can form double-helical filaments in the absence of DNA.</text>
</comment>
<comment type="subunit">
    <text evidence="1">Homooligomers. Forms double-helical filaments necessary for the formation of replication compartments within the host nucleus. Interacts with the origin-binding protein. Interacts with the helicase primase complex; this interaction stimulates primer synthesis activity of the helicase-primase complex. Interacts with the DNA polymerase. Interacts with the alkaline exonuclease; this interaction increases its nuclease processivity.</text>
</comment>
<comment type="subcellular location">
    <subcellularLocation>
        <location evidence="1">Host nucleus</location>
    </subcellularLocation>
    <text evidence="1">In the absence of DNA replication, found in the nuclear framework-associated structures (prereplicative sites). As viral DNA replication proceeds, it migrates to globular intranuclear structures (replication compartments).</text>
</comment>
<comment type="similarity">
    <text evidence="1">Belongs to the herpesviridae major DNA-binding protein family.</text>
</comment>
<dbReference type="EMBL" id="X92436">
    <property type="protein sequence ID" value="CAA63167.1"/>
    <property type="molecule type" value="Genomic_DNA"/>
</dbReference>
<dbReference type="EMBL" id="X83413">
    <property type="protein sequence ID" value="CAA58375.1"/>
    <property type="molecule type" value="Genomic_DNA"/>
</dbReference>
<dbReference type="RefSeq" id="NP_042934.1">
    <property type="nucleotide sequence ID" value="NC_001664.2"/>
</dbReference>
<dbReference type="SMR" id="P52338"/>
<dbReference type="GeneID" id="1487919"/>
<dbReference type="KEGG" id="vg:1487919"/>
<dbReference type="Proteomes" id="UP000009295">
    <property type="component" value="Segment"/>
</dbReference>
<dbReference type="GO" id="GO:0042025">
    <property type="term" value="C:host cell nucleus"/>
    <property type="evidence" value="ECO:0007669"/>
    <property type="project" value="UniProtKB-SubCell"/>
</dbReference>
<dbReference type="GO" id="GO:0003697">
    <property type="term" value="F:single-stranded DNA binding"/>
    <property type="evidence" value="ECO:0007669"/>
    <property type="project" value="InterPro"/>
</dbReference>
<dbReference type="GO" id="GO:0006260">
    <property type="term" value="P:DNA replication"/>
    <property type="evidence" value="ECO:0007669"/>
    <property type="project" value="UniProtKB-KW"/>
</dbReference>
<dbReference type="Gene3D" id="1.20.190.40">
    <property type="entry name" value="Viral ssDNA binding protein, head domain"/>
    <property type="match status" value="1"/>
</dbReference>
<dbReference type="HAMAP" id="MF_04007">
    <property type="entry name" value="HSV_DNBI"/>
    <property type="match status" value="1"/>
</dbReference>
<dbReference type="InterPro" id="IPR035989">
    <property type="entry name" value="DBP_sf"/>
</dbReference>
<dbReference type="InterPro" id="IPR043031">
    <property type="entry name" value="Viral_ssDBP_head"/>
</dbReference>
<dbReference type="InterPro" id="IPR000635">
    <property type="entry name" value="Viral_ssDNA-bd"/>
</dbReference>
<dbReference type="Pfam" id="PF00747">
    <property type="entry name" value="Viral_DNA_bp"/>
    <property type="match status" value="1"/>
</dbReference>
<dbReference type="SUPFAM" id="SSF118208">
    <property type="entry name" value="Viral ssDNA binding protein"/>
    <property type="match status" value="1"/>
</dbReference>
<organismHost>
    <name type="scientific">Homo sapiens</name>
    <name type="common">Human</name>
    <dbReference type="NCBI Taxonomy" id="9606"/>
</organismHost>